<protein>
    <recommendedName>
        <fullName evidence="4">Nonribosomal peptide synthetase atrA</fullName>
        <ecNumber evidence="3">2.3.1.-</ecNumber>
    </recommendedName>
    <alternativeName>
        <fullName evidence="4">Atromentin synthetase</fullName>
    </alternativeName>
</protein>
<keyword id="KW-0596">Phosphopantetheine</keyword>
<keyword id="KW-0597">Phosphoprotein</keyword>
<keyword id="KW-1185">Reference proteome</keyword>
<keyword id="KW-0808">Transferase</keyword>
<dbReference type="EC" id="2.3.1.-" evidence="3"/>
<dbReference type="EMBL" id="MG384315">
    <property type="protein sequence ID" value="AUO29225.1"/>
    <property type="molecule type" value="mRNA"/>
</dbReference>
<dbReference type="EMBL" id="CH476597">
    <property type="protein sequence ID" value="EAU36364.1"/>
    <property type="status" value="ALT_SEQ"/>
    <property type="molecule type" value="Genomic_DNA"/>
</dbReference>
<dbReference type="RefSeq" id="XP_001212268.1">
    <property type="nucleotide sequence ID" value="XM_001212268.1"/>
</dbReference>
<dbReference type="SMR" id="Q0CT94"/>
<dbReference type="STRING" id="341663.Q0CT94"/>
<dbReference type="ESTHER" id="asptn-atra">
    <property type="family name" value="Thioesterase"/>
</dbReference>
<dbReference type="EnsemblFungi" id="EAU36364">
    <property type="protein sequence ID" value="EAU36364"/>
    <property type="gene ID" value="ATEG_03090"/>
</dbReference>
<dbReference type="GeneID" id="4317854"/>
<dbReference type="eggNOG" id="KOG1176">
    <property type="taxonomic scope" value="Eukaryota"/>
</dbReference>
<dbReference type="HOGENOM" id="CLU_337691_0_0_1"/>
<dbReference type="OrthoDB" id="10253869at2759"/>
<dbReference type="Proteomes" id="UP000007963">
    <property type="component" value="Unassembled WGS sequence"/>
</dbReference>
<dbReference type="GO" id="GO:0016740">
    <property type="term" value="F:transferase activity"/>
    <property type="evidence" value="ECO:0007669"/>
    <property type="project" value="UniProtKB-KW"/>
</dbReference>
<dbReference type="GO" id="GO:0031957">
    <property type="term" value="F:very long-chain fatty acid-CoA ligase activity"/>
    <property type="evidence" value="ECO:0007669"/>
    <property type="project" value="TreeGrafter"/>
</dbReference>
<dbReference type="GO" id="GO:0006633">
    <property type="term" value="P:fatty acid biosynthetic process"/>
    <property type="evidence" value="ECO:0007669"/>
    <property type="project" value="TreeGrafter"/>
</dbReference>
<dbReference type="Gene3D" id="3.30.300.30">
    <property type="match status" value="1"/>
</dbReference>
<dbReference type="Gene3D" id="1.10.1200.10">
    <property type="entry name" value="ACP-like"/>
    <property type="match status" value="1"/>
</dbReference>
<dbReference type="Gene3D" id="3.40.50.1820">
    <property type="entry name" value="alpha/beta hydrolase"/>
    <property type="match status" value="1"/>
</dbReference>
<dbReference type="Gene3D" id="3.40.50.12780">
    <property type="entry name" value="N-terminal domain of ligase-like"/>
    <property type="match status" value="1"/>
</dbReference>
<dbReference type="InterPro" id="IPR029058">
    <property type="entry name" value="AB_hydrolase_fold"/>
</dbReference>
<dbReference type="InterPro" id="IPR036736">
    <property type="entry name" value="ACP-like_sf"/>
</dbReference>
<dbReference type="InterPro" id="IPR045851">
    <property type="entry name" value="AMP-bd_C_sf"/>
</dbReference>
<dbReference type="InterPro" id="IPR020845">
    <property type="entry name" value="AMP-binding_CS"/>
</dbReference>
<dbReference type="InterPro" id="IPR000873">
    <property type="entry name" value="AMP-dep_synth/lig_dom"/>
</dbReference>
<dbReference type="InterPro" id="IPR042099">
    <property type="entry name" value="ANL_N_sf"/>
</dbReference>
<dbReference type="InterPro" id="IPR009081">
    <property type="entry name" value="PP-bd_ACP"/>
</dbReference>
<dbReference type="InterPro" id="IPR001031">
    <property type="entry name" value="Thioesterase"/>
</dbReference>
<dbReference type="PANTHER" id="PTHR24096">
    <property type="entry name" value="LONG-CHAIN-FATTY-ACID--COA LIGASE"/>
    <property type="match status" value="1"/>
</dbReference>
<dbReference type="PANTHER" id="PTHR24096:SF267">
    <property type="entry name" value="MALONATE--COA LIGASE ACSF3, MITOCHONDRIAL"/>
    <property type="match status" value="1"/>
</dbReference>
<dbReference type="Pfam" id="PF00501">
    <property type="entry name" value="AMP-binding"/>
    <property type="match status" value="1"/>
</dbReference>
<dbReference type="Pfam" id="PF00550">
    <property type="entry name" value="PP-binding"/>
    <property type="match status" value="1"/>
</dbReference>
<dbReference type="Pfam" id="PF00975">
    <property type="entry name" value="Thioesterase"/>
    <property type="match status" value="1"/>
</dbReference>
<dbReference type="SUPFAM" id="SSF56801">
    <property type="entry name" value="Acetyl-CoA synthetase-like"/>
    <property type="match status" value="1"/>
</dbReference>
<dbReference type="SUPFAM" id="SSF47336">
    <property type="entry name" value="ACP-like"/>
    <property type="match status" value="1"/>
</dbReference>
<dbReference type="SUPFAM" id="SSF53474">
    <property type="entry name" value="alpha/beta-Hydrolases"/>
    <property type="match status" value="1"/>
</dbReference>
<dbReference type="PROSITE" id="PS00455">
    <property type="entry name" value="AMP_BINDING"/>
    <property type="match status" value="1"/>
</dbReference>
<dbReference type="PROSITE" id="PS50075">
    <property type="entry name" value="CARRIER"/>
    <property type="match status" value="1"/>
</dbReference>
<gene>
    <name evidence="4" type="primary">atrA</name>
    <name type="ORF">ATEG_03090</name>
</gene>
<feature type="chain" id="PRO_0000450546" description="Nonribosomal peptide synthetase atrA">
    <location>
        <begin position="1"/>
        <end position="920"/>
    </location>
</feature>
<feature type="domain" description="Carrier" evidence="2">
    <location>
        <begin position="558"/>
        <end position="637"/>
    </location>
</feature>
<feature type="region of interest" description="Adenylation (A) domain" evidence="1 6">
    <location>
        <begin position="13"/>
        <end position="428"/>
    </location>
</feature>
<feature type="region of interest" description="Thioesterase (TE) domain" evidence="1 6">
    <location>
        <begin position="656"/>
        <end position="905"/>
    </location>
</feature>
<feature type="modified residue" description="O-(pantetheine 4'-phosphoryl)serine" evidence="2">
    <location>
        <position position="595"/>
    </location>
</feature>
<evidence type="ECO:0000255" key="1"/>
<evidence type="ECO:0000255" key="2">
    <source>
        <dbReference type="PROSITE-ProRule" id="PRU00258"/>
    </source>
</evidence>
<evidence type="ECO:0000269" key="3">
    <source>
    </source>
</evidence>
<evidence type="ECO:0000303" key="4">
    <source>
    </source>
</evidence>
<evidence type="ECO:0000305" key="5"/>
<evidence type="ECO:0000305" key="6">
    <source>
    </source>
</evidence>
<organism>
    <name type="scientific">Aspergillus terreus (strain NIH 2624 / FGSC A1156)</name>
    <dbReference type="NCBI Taxonomy" id="341663"/>
    <lineage>
        <taxon>Eukaryota</taxon>
        <taxon>Fungi</taxon>
        <taxon>Dikarya</taxon>
        <taxon>Ascomycota</taxon>
        <taxon>Pezizomycotina</taxon>
        <taxon>Eurotiomycetes</taxon>
        <taxon>Eurotiomycetidae</taxon>
        <taxon>Eurotiales</taxon>
        <taxon>Aspergillaceae</taxon>
        <taxon>Aspergillus</taxon>
        <taxon>Aspergillus subgen. Circumdati</taxon>
    </lineage>
</organism>
<sequence>MSFKNLQQLLKEAAAQERCGRVICYSSGNLQNPTSRSYHELMQEAQRASWALRTATCARHGSAVLLHFDSHWDSILWFWATLLAGCVPVMSTALPNNTSLRTAHLEHLSRTLNGPLCLTRARMAPEFSEQTCIEPIAVETFDMQTSSKEDHVDSAPDDTAVMMLTSGSTGRPKAVCLTHGQILSSIVNKLSVVPLRGPFMNWIRLDHVAALTEIHLPAILSNKDQVHVQSADLLANPVEFIRLASEHRVAKTFAPNFFLATLRDALCATQHDSPKWDLSGLYIFSGGEGNVTRTCDEISKLLGRYGAPPNVIVPGFGMTETCAGAINNTSCPWYDIERTSDFASLGTCMSCIRMRITDDSGGNTCVSPGETGNLEVTGSAVFKEYFNNPSATADAFTSDGWFKTGDRGLIDTNGYLHLAGRLKETMIINGVKYSPHEIESVLDESNIPGLTPSYNCCFCSFPPGAETEVICLVYLPTYPEEDIRARIQTTDAISKCIVMLTGSRPVIIPLDKGLLQKSALGKLSRSSIKASYEKGEYKAYQDTNSHLVKMYRQAMRTPPKDELERSLLAIFVDSLELSEEEFDVQTPVFDLGITSIDLIRLKKSIEEQRDIDQEIPMTTLMANTTVRELSAALHDLQAPGTYKPVITLQNEGSKTPLWLIHPGVGEVLVFLNLAKYIKDRPVYALRARGFGAHETPFASIEETVRTYYAAIKAKQPRGPYAVAGYSYGTMLAFEVSKQLEQGGDTVGFVGSFNLPPHIKTRMRQLDFTECLLHLAYFLALMSEQRAGELAAAFAGVQPSQERVLDEVMQNADPVRLAELQLSRQYLLQWANLAFALQSMAVDYDPSGSVARMDVFYCVPLAVAAASKQRWREEHLSQWRDFTRSEPRFHDVGGAHYTMLAPEHVFGFQKTLRGALEARGI</sequence>
<name>ATRA_ASPTN</name>
<accession>Q0CT94</accession>
<accession>A0A2I6SS17</accession>
<comment type="function">
    <text evidence="3">Nonribosomal peptide synthetase that mediates the biosynthesis of atromentin (PubMed:29305695). AtrA first activates 4-hydroxyphenylpyruvate (HPPA) through its A domain to AMP-HPPA (PubMed:29305695). The HPPA unit is then loaded to the T domain and eventually transferred to the TE domain (PubMed:29305695). Another HPPA unit is then loaded onto the T domain (PubMed:29305695). The TE domain then catalyzes the condensation of the two HPPA units and the release of atromentin via cyclization (PubMed:29305695).</text>
</comment>
<comment type="catalytic activity">
    <reaction evidence="3">
        <text>2 3-(4-hydroxyphenyl)pyruvate + 2 ATP = atromentin + 2 AMP + 2 diphosphate + H(+)</text>
        <dbReference type="Rhea" id="RHEA:63968"/>
        <dbReference type="ChEBI" id="CHEBI:15378"/>
        <dbReference type="ChEBI" id="CHEBI:30616"/>
        <dbReference type="ChEBI" id="CHEBI:33019"/>
        <dbReference type="ChEBI" id="CHEBI:36242"/>
        <dbReference type="ChEBI" id="CHEBI:149642"/>
        <dbReference type="ChEBI" id="CHEBI:456215"/>
    </reaction>
    <physiologicalReaction direction="left-to-right" evidence="3">
        <dbReference type="Rhea" id="RHEA:63969"/>
    </physiologicalReaction>
</comment>
<comment type="domain">
    <text evidence="6">AtrA has an A-T-TE domain architecture (Probable). The adenylation (A) domain recognizes and activates the aryl acid substrates, and loads them onto the thiolation (T) domain (Probable). The thioesterase (TE) domain shares the missing condensation (C) domain function, and is responsible for condensation and final product release (Probable).</text>
</comment>
<comment type="similarity">
    <text evidence="5">Belongs to the NRP synthetase family.</text>
</comment>
<comment type="sequence caution" evidence="5">
    <conflict type="erroneous gene model prediction">
        <sequence resource="EMBL-CDS" id="EAU36364"/>
    </conflict>
</comment>
<proteinExistence type="evidence at protein level"/>
<reference key="1">
    <citation type="journal article" date="2018" name="Appl. Microbiol. Biotechnol.">
        <title>Production of alpha-keto carboxylic acid dimers in yeast by overexpression of NRPS-like genes from Aspergillus terreus.</title>
        <authorList>
            <person name="Huehner E."/>
            <person name="Backhaus K."/>
            <person name="Kraut R."/>
            <person name="Li S.M."/>
        </authorList>
    </citation>
    <scope>NUCLEOTIDE SEQUENCE [MRNA]</scope>
    <scope>DOMAIN</scope>
    <scope>FUNCTION</scope>
    <scope>CATALYTIC ACTIVITY</scope>
    <source>
        <strain>NIH 2624 / FGSC A1156</strain>
    </source>
</reference>
<reference key="2">
    <citation type="submission" date="2005-09" db="EMBL/GenBank/DDBJ databases">
        <title>Annotation of the Aspergillus terreus NIH2624 genome.</title>
        <authorList>
            <person name="Birren B.W."/>
            <person name="Lander E.S."/>
            <person name="Galagan J.E."/>
            <person name="Nusbaum C."/>
            <person name="Devon K."/>
            <person name="Henn M."/>
            <person name="Ma L.-J."/>
            <person name="Jaffe D.B."/>
            <person name="Butler J."/>
            <person name="Alvarez P."/>
            <person name="Gnerre S."/>
            <person name="Grabherr M."/>
            <person name="Kleber M."/>
            <person name="Mauceli E.W."/>
            <person name="Brockman W."/>
            <person name="Rounsley S."/>
            <person name="Young S.K."/>
            <person name="LaButti K."/>
            <person name="Pushparaj V."/>
            <person name="DeCaprio D."/>
            <person name="Crawford M."/>
            <person name="Koehrsen M."/>
            <person name="Engels R."/>
            <person name="Montgomery P."/>
            <person name="Pearson M."/>
            <person name="Howarth C."/>
            <person name="Larson L."/>
            <person name="Luoma S."/>
            <person name="White J."/>
            <person name="Alvarado L."/>
            <person name="Kodira C.D."/>
            <person name="Zeng Q."/>
            <person name="Oleary S."/>
            <person name="Yandava C."/>
            <person name="Denning D.W."/>
            <person name="Nierman W.C."/>
            <person name="Milne T."/>
            <person name="Madden K."/>
        </authorList>
    </citation>
    <scope>NUCLEOTIDE SEQUENCE [LARGE SCALE GENOMIC DNA]</scope>
    <source>
        <strain>NIH 2624 / FGSC A1156</strain>
    </source>
</reference>